<accession>Q54LA5</accession>
<keyword id="KW-0158">Chromosome</keyword>
<keyword id="KW-0238">DNA-binding</keyword>
<keyword id="KW-0544">Nucleosome core</keyword>
<keyword id="KW-0539">Nucleus</keyword>
<keyword id="KW-1185">Reference proteome</keyword>
<evidence type="ECO:0000250" key="1"/>
<evidence type="ECO:0000305" key="2"/>
<name>H2AZ_DICDI</name>
<sequence>MTESETTSKKVNKRVKPVPKSTKAGLIFPVGRIHRMLKNKVPLKRVSILSSVYLAAILEYLASEVLELTISQVSIQSKEYHNVRRISPRHLLLAIKTDEELDNLIRVSTTIAGGGVIPYIHEVLKKVEQKPTHPQQKQTIKSI</sequence>
<feature type="initiator methionine" description="Removed" evidence="2">
    <location>
        <position position="1"/>
    </location>
</feature>
<feature type="chain" id="PRO_0000389154" description="Histone H2A.z">
    <location>
        <begin position="2"/>
        <end position="143"/>
    </location>
</feature>
<organism>
    <name type="scientific">Dictyostelium discoideum</name>
    <name type="common">Social amoeba</name>
    <dbReference type="NCBI Taxonomy" id="44689"/>
    <lineage>
        <taxon>Eukaryota</taxon>
        <taxon>Amoebozoa</taxon>
        <taxon>Evosea</taxon>
        <taxon>Eumycetozoa</taxon>
        <taxon>Dictyostelia</taxon>
        <taxon>Dictyosteliales</taxon>
        <taxon>Dictyosteliaceae</taxon>
        <taxon>Dictyostelium</taxon>
    </lineage>
</organism>
<dbReference type="EMBL" id="AAFI02000089">
    <property type="protein sequence ID" value="EAL64129.1"/>
    <property type="molecule type" value="Genomic_DNA"/>
</dbReference>
<dbReference type="RefSeq" id="XP_637656.1">
    <property type="nucleotide sequence ID" value="XM_632564.1"/>
</dbReference>
<dbReference type="SMR" id="Q54LA5"/>
<dbReference type="FunCoup" id="Q54LA5">
    <property type="interactions" value="457"/>
</dbReference>
<dbReference type="STRING" id="44689.Q54LA5"/>
<dbReference type="PaxDb" id="44689-DDB0216302"/>
<dbReference type="EnsemblProtists" id="EAL64129">
    <property type="protein sequence ID" value="EAL64129"/>
    <property type="gene ID" value="DDB_G0286747"/>
</dbReference>
<dbReference type="GeneID" id="8625796"/>
<dbReference type="KEGG" id="ddi:DDB_G0286747"/>
<dbReference type="dictyBase" id="DDB_G0286747">
    <property type="gene designation" value="H2AZ"/>
</dbReference>
<dbReference type="VEuPathDB" id="AmoebaDB:DDB_G0286747"/>
<dbReference type="eggNOG" id="KOG1757">
    <property type="taxonomic scope" value="Eukaryota"/>
</dbReference>
<dbReference type="HOGENOM" id="CLU_062828_2_2_1"/>
<dbReference type="InParanoid" id="Q54LA5"/>
<dbReference type="OMA" id="PVGRIHT"/>
<dbReference type="PhylomeDB" id="Q54LA5"/>
<dbReference type="Reactome" id="R-DDI-2299718">
    <property type="pathway name" value="Condensation of Prophase Chromosomes"/>
</dbReference>
<dbReference type="Reactome" id="R-DDI-2559580">
    <property type="pathway name" value="Oxidative Stress Induced Senescence"/>
</dbReference>
<dbReference type="Reactome" id="R-DDI-427359">
    <property type="pathway name" value="SIRT1 negatively regulates rRNA expression"/>
</dbReference>
<dbReference type="Reactome" id="R-DDI-5625886">
    <property type="pathway name" value="Activated PKN1 stimulates transcription of AR (androgen receptor) regulated genes KLK2 and KLK3"/>
</dbReference>
<dbReference type="Reactome" id="R-DDI-68616">
    <property type="pathway name" value="Assembly of the ORC complex at the origin of replication"/>
</dbReference>
<dbReference type="Reactome" id="R-DDI-73772">
    <property type="pathway name" value="RNA Polymerase I Promoter Escape"/>
</dbReference>
<dbReference type="Reactome" id="R-DDI-9843940">
    <property type="pathway name" value="Regulation of endogenous retroelements by KRAB-ZFP proteins"/>
</dbReference>
<dbReference type="PRO" id="PR:Q54LA5"/>
<dbReference type="Proteomes" id="UP000002195">
    <property type="component" value="Chromosome 4"/>
</dbReference>
<dbReference type="GO" id="GO:0000786">
    <property type="term" value="C:nucleosome"/>
    <property type="evidence" value="ECO:0000318"/>
    <property type="project" value="GO_Central"/>
</dbReference>
<dbReference type="GO" id="GO:0005634">
    <property type="term" value="C:nucleus"/>
    <property type="evidence" value="ECO:0000318"/>
    <property type="project" value="GO_Central"/>
</dbReference>
<dbReference type="GO" id="GO:0003677">
    <property type="term" value="F:DNA binding"/>
    <property type="evidence" value="ECO:0007669"/>
    <property type="project" value="UniProtKB-KW"/>
</dbReference>
<dbReference type="GO" id="GO:0046982">
    <property type="term" value="F:protein heterodimerization activity"/>
    <property type="evidence" value="ECO:0007669"/>
    <property type="project" value="InterPro"/>
</dbReference>
<dbReference type="GO" id="GO:0030527">
    <property type="term" value="F:structural constituent of chromatin"/>
    <property type="evidence" value="ECO:0000318"/>
    <property type="project" value="GO_Central"/>
</dbReference>
<dbReference type="GO" id="GO:0031507">
    <property type="term" value="P:heterochromatin formation"/>
    <property type="evidence" value="ECO:0000318"/>
    <property type="project" value="GO_Central"/>
</dbReference>
<dbReference type="CDD" id="cd00074">
    <property type="entry name" value="HFD_H2A"/>
    <property type="match status" value="1"/>
</dbReference>
<dbReference type="FunFam" id="1.10.20.10:FF:000089">
    <property type="entry name" value="Histone H2A"/>
    <property type="match status" value="1"/>
</dbReference>
<dbReference type="Gene3D" id="1.10.20.10">
    <property type="entry name" value="Histone, subunit A"/>
    <property type="match status" value="1"/>
</dbReference>
<dbReference type="InterPro" id="IPR009072">
    <property type="entry name" value="Histone-fold"/>
</dbReference>
<dbReference type="InterPro" id="IPR002119">
    <property type="entry name" value="Histone_H2A"/>
</dbReference>
<dbReference type="InterPro" id="IPR032454">
    <property type="entry name" value="Histone_H2A_C"/>
</dbReference>
<dbReference type="InterPro" id="IPR032458">
    <property type="entry name" value="Histone_H2A_CS"/>
</dbReference>
<dbReference type="PANTHER" id="PTHR23430">
    <property type="entry name" value="HISTONE H2A"/>
    <property type="match status" value="1"/>
</dbReference>
<dbReference type="Pfam" id="PF16211">
    <property type="entry name" value="Histone_H2A_C"/>
    <property type="match status" value="1"/>
</dbReference>
<dbReference type="PRINTS" id="PR00620">
    <property type="entry name" value="HISTONEH2A"/>
</dbReference>
<dbReference type="SMART" id="SM00414">
    <property type="entry name" value="H2A"/>
    <property type="match status" value="1"/>
</dbReference>
<dbReference type="SUPFAM" id="SSF47113">
    <property type="entry name" value="Histone-fold"/>
    <property type="match status" value="1"/>
</dbReference>
<dbReference type="PROSITE" id="PS00046">
    <property type="entry name" value="HISTONE_H2A"/>
    <property type="match status" value="1"/>
</dbReference>
<proteinExistence type="inferred from homology"/>
<comment type="function">
    <text evidence="1">Core component of nucleosome which plays a central role in DNA double strand break (DSB) repair. Nucleosomes wrap and compact DNA into chromatin, limiting DNA accessibility to the cellular machineries which require DNA as a template. Histones thereby play a central role in transcription regulation, DNA repair, DNA replication and chromosomal stability. DNA accessibility is regulated via a complex set of post-translational modifications of histones, also called histone code, and nucleosome remodeling (By similarity).</text>
</comment>
<comment type="subunit">
    <text evidence="1">The nucleosome is a histone octamer containing two molecules each of H2A, H2B, H3 and H4 assembled in one H3-H4 heterotetramer and two H2A-H2B heterodimers. The octamer wraps approximately 147 bp of DNA (By similarity).</text>
</comment>
<comment type="subcellular location">
    <subcellularLocation>
        <location evidence="1">Nucleus</location>
    </subcellularLocation>
    <subcellularLocation>
        <location evidence="1">Chromosome</location>
    </subcellularLocation>
</comment>
<comment type="similarity">
    <text evidence="2">Belongs to the histone H2A family.</text>
</comment>
<gene>
    <name type="primary">H2AZ</name>
    <name type="ORF">DDB_G0286747</name>
</gene>
<protein>
    <recommendedName>
        <fullName>Histone H2A.z</fullName>
    </recommendedName>
</protein>
<reference key="1">
    <citation type="journal article" date="2005" name="Nature">
        <title>The genome of the social amoeba Dictyostelium discoideum.</title>
        <authorList>
            <person name="Eichinger L."/>
            <person name="Pachebat J.A."/>
            <person name="Gloeckner G."/>
            <person name="Rajandream M.A."/>
            <person name="Sucgang R."/>
            <person name="Berriman M."/>
            <person name="Song J."/>
            <person name="Olsen R."/>
            <person name="Szafranski K."/>
            <person name="Xu Q."/>
            <person name="Tunggal B."/>
            <person name="Kummerfeld S."/>
            <person name="Madera M."/>
            <person name="Konfortov B.A."/>
            <person name="Rivero F."/>
            <person name="Bankier A.T."/>
            <person name="Lehmann R."/>
            <person name="Hamlin N."/>
            <person name="Davies R."/>
            <person name="Gaudet P."/>
            <person name="Fey P."/>
            <person name="Pilcher K."/>
            <person name="Chen G."/>
            <person name="Saunders D."/>
            <person name="Sodergren E.J."/>
            <person name="Davis P."/>
            <person name="Kerhornou A."/>
            <person name="Nie X."/>
            <person name="Hall N."/>
            <person name="Anjard C."/>
            <person name="Hemphill L."/>
            <person name="Bason N."/>
            <person name="Farbrother P."/>
            <person name="Desany B."/>
            <person name="Just E."/>
            <person name="Morio T."/>
            <person name="Rost R."/>
            <person name="Churcher C.M."/>
            <person name="Cooper J."/>
            <person name="Haydock S."/>
            <person name="van Driessche N."/>
            <person name="Cronin A."/>
            <person name="Goodhead I."/>
            <person name="Muzny D.M."/>
            <person name="Mourier T."/>
            <person name="Pain A."/>
            <person name="Lu M."/>
            <person name="Harper D."/>
            <person name="Lindsay R."/>
            <person name="Hauser H."/>
            <person name="James K.D."/>
            <person name="Quiles M."/>
            <person name="Madan Babu M."/>
            <person name="Saito T."/>
            <person name="Buchrieser C."/>
            <person name="Wardroper A."/>
            <person name="Felder M."/>
            <person name="Thangavelu M."/>
            <person name="Johnson D."/>
            <person name="Knights A."/>
            <person name="Loulseged H."/>
            <person name="Mungall K.L."/>
            <person name="Oliver K."/>
            <person name="Price C."/>
            <person name="Quail M.A."/>
            <person name="Urushihara H."/>
            <person name="Hernandez J."/>
            <person name="Rabbinowitsch E."/>
            <person name="Steffen D."/>
            <person name="Sanders M."/>
            <person name="Ma J."/>
            <person name="Kohara Y."/>
            <person name="Sharp S."/>
            <person name="Simmonds M.N."/>
            <person name="Spiegler S."/>
            <person name="Tivey A."/>
            <person name="Sugano S."/>
            <person name="White B."/>
            <person name="Walker D."/>
            <person name="Woodward J.R."/>
            <person name="Winckler T."/>
            <person name="Tanaka Y."/>
            <person name="Shaulsky G."/>
            <person name="Schleicher M."/>
            <person name="Weinstock G.M."/>
            <person name="Rosenthal A."/>
            <person name="Cox E.C."/>
            <person name="Chisholm R.L."/>
            <person name="Gibbs R.A."/>
            <person name="Loomis W.F."/>
            <person name="Platzer M."/>
            <person name="Kay R.R."/>
            <person name="Williams J.G."/>
            <person name="Dear P.H."/>
            <person name="Noegel A.A."/>
            <person name="Barrell B.G."/>
            <person name="Kuspa A."/>
        </authorList>
    </citation>
    <scope>NUCLEOTIDE SEQUENCE [LARGE SCALE GENOMIC DNA]</scope>
    <source>
        <strain>AX4</strain>
    </source>
</reference>